<gene>
    <name type="primary">tpi1b</name>
</gene>
<dbReference type="EC" id="5.3.1.1" evidence="3"/>
<dbReference type="EC" id="4.2.3.3" evidence="2"/>
<dbReference type="EMBL" id="AF387819">
    <property type="protein sequence ID" value="AAK85202.1"/>
    <property type="molecule type" value="mRNA"/>
</dbReference>
<dbReference type="EMBL" id="BC152271">
    <property type="protein sequence ID" value="AAI52272.1"/>
    <property type="molecule type" value="mRNA"/>
</dbReference>
<dbReference type="EMBL" id="BC053294">
    <property type="protein sequence ID" value="AAH53294.1"/>
    <property type="molecule type" value="mRNA"/>
</dbReference>
<dbReference type="RefSeq" id="NP_705954.2">
    <property type="nucleotide sequence ID" value="NM_153668.4"/>
</dbReference>
<dbReference type="SMR" id="Q90XG0"/>
<dbReference type="FunCoup" id="Q90XG0">
    <property type="interactions" value="2021"/>
</dbReference>
<dbReference type="STRING" id="7955.ENSDARP00000060055"/>
<dbReference type="PaxDb" id="7955-ENSDARP00000060055"/>
<dbReference type="GeneID" id="560753"/>
<dbReference type="KEGG" id="dre:560753"/>
<dbReference type="AGR" id="ZFIN:ZDB-GENE-020416-4"/>
<dbReference type="CTD" id="560753"/>
<dbReference type="ZFIN" id="ZDB-GENE-020416-4">
    <property type="gene designation" value="tpi1b"/>
</dbReference>
<dbReference type="eggNOG" id="KOG1643">
    <property type="taxonomic scope" value="Eukaryota"/>
</dbReference>
<dbReference type="InParanoid" id="Q90XG0"/>
<dbReference type="OrthoDB" id="6715177at2759"/>
<dbReference type="PhylomeDB" id="Q90XG0"/>
<dbReference type="TreeFam" id="TF300829"/>
<dbReference type="Reactome" id="R-DRE-70171">
    <property type="pathway name" value="Glycolysis"/>
</dbReference>
<dbReference type="Reactome" id="R-DRE-70263">
    <property type="pathway name" value="Gluconeogenesis"/>
</dbReference>
<dbReference type="UniPathway" id="UPA00109">
    <property type="reaction ID" value="UER00189"/>
</dbReference>
<dbReference type="UniPathway" id="UPA00138"/>
<dbReference type="PRO" id="PR:Q90XG0"/>
<dbReference type="Proteomes" id="UP000000437">
    <property type="component" value="Alternate scaffold 16"/>
</dbReference>
<dbReference type="Proteomes" id="UP000000437">
    <property type="component" value="Chromosome 16"/>
</dbReference>
<dbReference type="GO" id="GO:0005829">
    <property type="term" value="C:cytosol"/>
    <property type="evidence" value="ECO:0000318"/>
    <property type="project" value="GO_Central"/>
</dbReference>
<dbReference type="GO" id="GO:0008929">
    <property type="term" value="F:methylglyoxal synthase activity"/>
    <property type="evidence" value="ECO:0000250"/>
    <property type="project" value="UniProtKB"/>
</dbReference>
<dbReference type="GO" id="GO:0042803">
    <property type="term" value="F:protein homodimerization activity"/>
    <property type="evidence" value="ECO:0000250"/>
    <property type="project" value="UniProtKB"/>
</dbReference>
<dbReference type="GO" id="GO:0004807">
    <property type="term" value="F:triose-phosphate isomerase activity"/>
    <property type="evidence" value="ECO:0000250"/>
    <property type="project" value="UniProtKB"/>
</dbReference>
<dbReference type="GO" id="GO:0006094">
    <property type="term" value="P:gluconeogenesis"/>
    <property type="evidence" value="ECO:0000318"/>
    <property type="project" value="GO_Central"/>
</dbReference>
<dbReference type="GO" id="GO:0046166">
    <property type="term" value="P:glyceraldehyde-3-phosphate biosynthetic process"/>
    <property type="evidence" value="ECO:0000250"/>
    <property type="project" value="UniProtKB"/>
</dbReference>
<dbReference type="GO" id="GO:0019563">
    <property type="term" value="P:glycerol catabolic process"/>
    <property type="evidence" value="ECO:0000318"/>
    <property type="project" value="GO_Central"/>
</dbReference>
<dbReference type="GO" id="GO:0006096">
    <property type="term" value="P:glycolytic process"/>
    <property type="evidence" value="ECO:0000318"/>
    <property type="project" value="GO_Central"/>
</dbReference>
<dbReference type="GO" id="GO:0019242">
    <property type="term" value="P:methylglyoxal biosynthetic process"/>
    <property type="evidence" value="ECO:0000250"/>
    <property type="project" value="UniProtKB"/>
</dbReference>
<dbReference type="CDD" id="cd00311">
    <property type="entry name" value="TIM"/>
    <property type="match status" value="1"/>
</dbReference>
<dbReference type="FunFam" id="3.20.20.70:FF:000025">
    <property type="entry name" value="Triosephosphate isomerase"/>
    <property type="match status" value="1"/>
</dbReference>
<dbReference type="Gene3D" id="3.20.20.70">
    <property type="entry name" value="Aldolase class I"/>
    <property type="match status" value="1"/>
</dbReference>
<dbReference type="HAMAP" id="MF_00147_B">
    <property type="entry name" value="TIM_B"/>
    <property type="match status" value="1"/>
</dbReference>
<dbReference type="InterPro" id="IPR013785">
    <property type="entry name" value="Aldolase_TIM"/>
</dbReference>
<dbReference type="InterPro" id="IPR035990">
    <property type="entry name" value="TIM_sf"/>
</dbReference>
<dbReference type="InterPro" id="IPR022896">
    <property type="entry name" value="TrioseP_Isoase_bac/euk"/>
</dbReference>
<dbReference type="InterPro" id="IPR000652">
    <property type="entry name" value="Triosephosphate_isomerase"/>
</dbReference>
<dbReference type="InterPro" id="IPR020861">
    <property type="entry name" value="Triosephosphate_isomerase_AS"/>
</dbReference>
<dbReference type="NCBIfam" id="TIGR00419">
    <property type="entry name" value="tim"/>
    <property type="match status" value="1"/>
</dbReference>
<dbReference type="PANTHER" id="PTHR21139">
    <property type="entry name" value="TRIOSEPHOSPHATE ISOMERASE"/>
    <property type="match status" value="1"/>
</dbReference>
<dbReference type="PANTHER" id="PTHR21139:SF19">
    <property type="entry name" value="TRIOSEPHOSPHATE ISOMERASE B"/>
    <property type="match status" value="1"/>
</dbReference>
<dbReference type="Pfam" id="PF00121">
    <property type="entry name" value="TIM"/>
    <property type="match status" value="1"/>
</dbReference>
<dbReference type="SUPFAM" id="SSF51351">
    <property type="entry name" value="Triosephosphate isomerase (TIM)"/>
    <property type="match status" value="1"/>
</dbReference>
<dbReference type="PROSITE" id="PS00171">
    <property type="entry name" value="TIM_1"/>
    <property type="match status" value="1"/>
</dbReference>
<dbReference type="PROSITE" id="PS51440">
    <property type="entry name" value="TIM_2"/>
    <property type="match status" value="1"/>
</dbReference>
<feature type="initiator methionine" description="Removed" evidence="1">
    <location>
        <position position="1"/>
    </location>
</feature>
<feature type="chain" id="PRO_0000345141" description="Triosephosphate isomerase B">
    <location>
        <begin position="2"/>
        <end position="248"/>
    </location>
</feature>
<feature type="active site" description="Electrophile" evidence="3">
    <location>
        <position position="95"/>
    </location>
</feature>
<feature type="active site" description="Proton acceptor" evidence="3">
    <location>
        <position position="165"/>
    </location>
</feature>
<feature type="binding site" evidence="3">
    <location>
        <position position="11"/>
    </location>
    <ligand>
        <name>substrate</name>
    </ligand>
</feature>
<feature type="binding site" evidence="3">
    <location>
        <position position="13"/>
    </location>
    <ligand>
        <name>substrate</name>
    </ligand>
</feature>
<feature type="sequence conflict" description="In Ref. 2; AAH53294/AAI52272." evidence="4" ref="2">
    <original>D</original>
    <variation>N</variation>
    <location>
        <position position="56"/>
    </location>
</feature>
<proteinExistence type="evidence at transcript level"/>
<name>TPISB_DANRE</name>
<evidence type="ECO:0000250" key="1"/>
<evidence type="ECO:0000250" key="2">
    <source>
        <dbReference type="UniProtKB" id="P00939"/>
    </source>
</evidence>
<evidence type="ECO:0000255" key="3">
    <source>
        <dbReference type="PROSITE-ProRule" id="PRU10127"/>
    </source>
</evidence>
<evidence type="ECO:0000305" key="4"/>
<sequence length="248" mass="26828">MSGRKFFVGGNWKMNGDKKSIEELANTLNSAKLNPDTEVVCGAPTIYLDYARSKLDPNIDVAAQNCYKVAKGAFTGEISPAMIKDCGVKWVILGHSERRHVFGESDELIGQKVAHALENGLGVIACIGEKLDEREAGITEKVVFAQTKFIADNVKDWSKVVLAYEPVWAIGTGKTASPQQAQEVHDKLRQWLKTNVSEAVANSVRIIYGGSVTGGTCKELASQKDLDGFLVGGASLKPEFIDIINAKA</sequence>
<comment type="function">
    <text evidence="2">Triosephosphate isomerase is an extremely efficient metabolic enzyme that catalyzes the interconversion between dihydroxyacetone phosphate (DHAP) and D-glyceraldehyde-3-phosphate (G3P) in glycolysis and gluconeogenesis.</text>
</comment>
<comment type="function">
    <text evidence="2">It is also responsible for the non-negligible production of methylglyoxal a reactive cytotoxic side-product that modifies and can alter proteins, DNA and lipids.</text>
</comment>
<comment type="catalytic activity">
    <reaction evidence="2">
        <text>dihydroxyacetone phosphate = methylglyoxal + phosphate</text>
        <dbReference type="Rhea" id="RHEA:17937"/>
        <dbReference type="ChEBI" id="CHEBI:17158"/>
        <dbReference type="ChEBI" id="CHEBI:43474"/>
        <dbReference type="ChEBI" id="CHEBI:57642"/>
        <dbReference type="EC" id="4.2.3.3"/>
    </reaction>
</comment>
<comment type="catalytic activity">
    <reaction evidence="3">
        <text>D-glyceraldehyde 3-phosphate = dihydroxyacetone phosphate</text>
        <dbReference type="Rhea" id="RHEA:18585"/>
        <dbReference type="ChEBI" id="CHEBI:57642"/>
        <dbReference type="ChEBI" id="CHEBI:59776"/>
        <dbReference type="EC" id="5.3.1.1"/>
    </reaction>
</comment>
<comment type="pathway">
    <text evidence="3">Carbohydrate degradation; glycolysis; D-glyceraldehyde 3-phosphate from glycerone phosphate: step 1/1.</text>
</comment>
<comment type="pathway">
    <text evidence="3">Carbohydrate biosynthesis; gluconeogenesis.</text>
</comment>
<comment type="subunit">
    <text evidence="3">Homodimer.</text>
</comment>
<comment type="subcellular location">
    <subcellularLocation>
        <location evidence="3">Cytoplasm</location>
    </subcellularLocation>
</comment>
<comment type="similarity">
    <text evidence="4">Belongs to the triosephosphate isomerase family.</text>
</comment>
<reference key="1">
    <citation type="journal article" date="2001" name="Genetics">
        <title>Evidence for a period of directional selection following gene duplication in a neurally expressed locus of triosephosphate isomerase.</title>
        <authorList>
            <person name="Merritt T.J.S."/>
            <person name="Quattro J.M."/>
        </authorList>
    </citation>
    <scope>NUCLEOTIDE SEQUENCE [MRNA]</scope>
</reference>
<reference key="2">
    <citation type="submission" date="2003-06" db="EMBL/GenBank/DDBJ databases">
        <authorList>
            <consortium name="NIH - Zebrafish Gene Collection (ZGC) project"/>
        </authorList>
    </citation>
    <scope>NUCLEOTIDE SEQUENCE [LARGE SCALE MRNA]</scope>
    <source>
        <tissue>Embryo</tissue>
        <tissue>Kidney</tissue>
    </source>
</reference>
<keyword id="KW-0963">Cytoplasm</keyword>
<keyword id="KW-0312">Gluconeogenesis</keyword>
<keyword id="KW-0324">Glycolysis</keyword>
<keyword id="KW-0413">Isomerase</keyword>
<keyword id="KW-0456">Lyase</keyword>
<keyword id="KW-1185">Reference proteome</keyword>
<accession>Q90XG0</accession>
<accession>Q7T315</accession>
<protein>
    <recommendedName>
        <fullName>Triosephosphate isomerase B</fullName>
        <shortName>TIM-B</shortName>
        <ecNumber evidence="3">5.3.1.1</ecNumber>
    </recommendedName>
    <alternativeName>
        <fullName evidence="2">Methylglyoxal synthase B</fullName>
        <ecNumber evidence="2">4.2.3.3</ecNumber>
    </alternativeName>
    <alternativeName>
        <fullName>Triose-phosphate isomerase B</fullName>
    </alternativeName>
</protein>
<organism>
    <name type="scientific">Danio rerio</name>
    <name type="common">Zebrafish</name>
    <name type="synonym">Brachydanio rerio</name>
    <dbReference type="NCBI Taxonomy" id="7955"/>
    <lineage>
        <taxon>Eukaryota</taxon>
        <taxon>Metazoa</taxon>
        <taxon>Chordata</taxon>
        <taxon>Craniata</taxon>
        <taxon>Vertebrata</taxon>
        <taxon>Euteleostomi</taxon>
        <taxon>Actinopterygii</taxon>
        <taxon>Neopterygii</taxon>
        <taxon>Teleostei</taxon>
        <taxon>Ostariophysi</taxon>
        <taxon>Cypriniformes</taxon>
        <taxon>Danionidae</taxon>
        <taxon>Danioninae</taxon>
        <taxon>Danio</taxon>
    </lineage>
</organism>